<reference key="1">
    <citation type="journal article" date="2005" name="Science">
        <title>The transcriptional landscape of the mammalian genome.</title>
        <authorList>
            <person name="Carninci P."/>
            <person name="Kasukawa T."/>
            <person name="Katayama S."/>
            <person name="Gough J."/>
            <person name="Frith M.C."/>
            <person name="Maeda N."/>
            <person name="Oyama R."/>
            <person name="Ravasi T."/>
            <person name="Lenhard B."/>
            <person name="Wells C."/>
            <person name="Kodzius R."/>
            <person name="Shimokawa K."/>
            <person name="Bajic V.B."/>
            <person name="Brenner S.E."/>
            <person name="Batalov S."/>
            <person name="Forrest A.R."/>
            <person name="Zavolan M."/>
            <person name="Davis M.J."/>
            <person name="Wilming L.G."/>
            <person name="Aidinis V."/>
            <person name="Allen J.E."/>
            <person name="Ambesi-Impiombato A."/>
            <person name="Apweiler R."/>
            <person name="Aturaliya R.N."/>
            <person name="Bailey T.L."/>
            <person name="Bansal M."/>
            <person name="Baxter L."/>
            <person name="Beisel K.W."/>
            <person name="Bersano T."/>
            <person name="Bono H."/>
            <person name="Chalk A.M."/>
            <person name="Chiu K.P."/>
            <person name="Choudhary V."/>
            <person name="Christoffels A."/>
            <person name="Clutterbuck D.R."/>
            <person name="Crowe M.L."/>
            <person name="Dalla E."/>
            <person name="Dalrymple B.P."/>
            <person name="de Bono B."/>
            <person name="Della Gatta G."/>
            <person name="di Bernardo D."/>
            <person name="Down T."/>
            <person name="Engstrom P."/>
            <person name="Fagiolini M."/>
            <person name="Faulkner G."/>
            <person name="Fletcher C.F."/>
            <person name="Fukushima T."/>
            <person name="Furuno M."/>
            <person name="Futaki S."/>
            <person name="Gariboldi M."/>
            <person name="Georgii-Hemming P."/>
            <person name="Gingeras T.R."/>
            <person name="Gojobori T."/>
            <person name="Green R.E."/>
            <person name="Gustincich S."/>
            <person name="Harbers M."/>
            <person name="Hayashi Y."/>
            <person name="Hensch T.K."/>
            <person name="Hirokawa N."/>
            <person name="Hill D."/>
            <person name="Huminiecki L."/>
            <person name="Iacono M."/>
            <person name="Ikeo K."/>
            <person name="Iwama A."/>
            <person name="Ishikawa T."/>
            <person name="Jakt M."/>
            <person name="Kanapin A."/>
            <person name="Katoh M."/>
            <person name="Kawasawa Y."/>
            <person name="Kelso J."/>
            <person name="Kitamura H."/>
            <person name="Kitano H."/>
            <person name="Kollias G."/>
            <person name="Krishnan S.P."/>
            <person name="Kruger A."/>
            <person name="Kummerfeld S.K."/>
            <person name="Kurochkin I.V."/>
            <person name="Lareau L.F."/>
            <person name="Lazarevic D."/>
            <person name="Lipovich L."/>
            <person name="Liu J."/>
            <person name="Liuni S."/>
            <person name="McWilliam S."/>
            <person name="Madan Babu M."/>
            <person name="Madera M."/>
            <person name="Marchionni L."/>
            <person name="Matsuda H."/>
            <person name="Matsuzawa S."/>
            <person name="Miki H."/>
            <person name="Mignone F."/>
            <person name="Miyake S."/>
            <person name="Morris K."/>
            <person name="Mottagui-Tabar S."/>
            <person name="Mulder N."/>
            <person name="Nakano N."/>
            <person name="Nakauchi H."/>
            <person name="Ng P."/>
            <person name="Nilsson R."/>
            <person name="Nishiguchi S."/>
            <person name="Nishikawa S."/>
            <person name="Nori F."/>
            <person name="Ohara O."/>
            <person name="Okazaki Y."/>
            <person name="Orlando V."/>
            <person name="Pang K.C."/>
            <person name="Pavan W.J."/>
            <person name="Pavesi G."/>
            <person name="Pesole G."/>
            <person name="Petrovsky N."/>
            <person name="Piazza S."/>
            <person name="Reed J."/>
            <person name="Reid J.F."/>
            <person name="Ring B.Z."/>
            <person name="Ringwald M."/>
            <person name="Rost B."/>
            <person name="Ruan Y."/>
            <person name="Salzberg S.L."/>
            <person name="Sandelin A."/>
            <person name="Schneider C."/>
            <person name="Schoenbach C."/>
            <person name="Sekiguchi K."/>
            <person name="Semple C.A."/>
            <person name="Seno S."/>
            <person name="Sessa L."/>
            <person name="Sheng Y."/>
            <person name="Shibata Y."/>
            <person name="Shimada H."/>
            <person name="Shimada K."/>
            <person name="Silva D."/>
            <person name="Sinclair B."/>
            <person name="Sperling S."/>
            <person name="Stupka E."/>
            <person name="Sugiura K."/>
            <person name="Sultana R."/>
            <person name="Takenaka Y."/>
            <person name="Taki K."/>
            <person name="Tammoja K."/>
            <person name="Tan S.L."/>
            <person name="Tang S."/>
            <person name="Taylor M.S."/>
            <person name="Tegner J."/>
            <person name="Teichmann S.A."/>
            <person name="Ueda H.R."/>
            <person name="van Nimwegen E."/>
            <person name="Verardo R."/>
            <person name="Wei C.L."/>
            <person name="Yagi K."/>
            <person name="Yamanishi H."/>
            <person name="Zabarovsky E."/>
            <person name="Zhu S."/>
            <person name="Zimmer A."/>
            <person name="Hide W."/>
            <person name="Bult C."/>
            <person name="Grimmond S.M."/>
            <person name="Teasdale R.D."/>
            <person name="Liu E.T."/>
            <person name="Brusic V."/>
            <person name="Quackenbush J."/>
            <person name="Wahlestedt C."/>
            <person name="Mattick J.S."/>
            <person name="Hume D.A."/>
            <person name="Kai C."/>
            <person name="Sasaki D."/>
            <person name="Tomaru Y."/>
            <person name="Fukuda S."/>
            <person name="Kanamori-Katayama M."/>
            <person name="Suzuki M."/>
            <person name="Aoki J."/>
            <person name="Arakawa T."/>
            <person name="Iida J."/>
            <person name="Imamura K."/>
            <person name="Itoh M."/>
            <person name="Kato T."/>
            <person name="Kawaji H."/>
            <person name="Kawagashira N."/>
            <person name="Kawashima T."/>
            <person name="Kojima M."/>
            <person name="Kondo S."/>
            <person name="Konno H."/>
            <person name="Nakano K."/>
            <person name="Ninomiya N."/>
            <person name="Nishio T."/>
            <person name="Okada M."/>
            <person name="Plessy C."/>
            <person name="Shibata K."/>
            <person name="Shiraki T."/>
            <person name="Suzuki S."/>
            <person name="Tagami M."/>
            <person name="Waki K."/>
            <person name="Watahiki A."/>
            <person name="Okamura-Oho Y."/>
            <person name="Suzuki H."/>
            <person name="Kawai J."/>
            <person name="Hayashizaki Y."/>
        </authorList>
    </citation>
    <scope>NUCLEOTIDE SEQUENCE [LARGE SCALE MRNA] (ISOFORM 1)</scope>
    <source>
        <tissue>Mammary gland</tissue>
    </source>
</reference>
<reference key="2">
    <citation type="journal article" date="2004" name="Genome Res.">
        <title>The status, quality, and expansion of the NIH full-length cDNA project: the Mammalian Gene Collection (MGC).</title>
        <authorList>
            <consortium name="The MGC Project Team"/>
        </authorList>
    </citation>
    <scope>NUCLEOTIDE SEQUENCE [LARGE SCALE MRNA] (ISOFORMS 1 AND 2)</scope>
    <source>
        <strain>C57BL/6J</strain>
        <strain>FVB/N</strain>
        <tissue>Brain</tissue>
        <tissue>Embryo</tissue>
        <tissue>Mammary tumor</tissue>
    </source>
</reference>
<reference key="3">
    <citation type="journal article" date="2010" name="Cell">
        <title>A tissue-specific atlas of mouse protein phosphorylation and expression.</title>
        <authorList>
            <person name="Huttlin E.L."/>
            <person name="Jedrychowski M.P."/>
            <person name="Elias J.E."/>
            <person name="Goswami T."/>
            <person name="Rad R."/>
            <person name="Beausoleil S.A."/>
            <person name="Villen J."/>
            <person name="Haas W."/>
            <person name="Sowa M.E."/>
            <person name="Gygi S.P."/>
        </authorList>
    </citation>
    <scope>PHOSPHORYLATION [LARGE SCALE ANALYSIS] AT SER-193 AND THR-215</scope>
    <scope>IDENTIFICATION BY MASS SPECTROMETRY [LARGE SCALE ANALYSIS]</scope>
    <source>
        <tissue>Brown adipose tissue</tissue>
        <tissue>Kidney</tissue>
        <tissue>Liver</tissue>
        <tissue>Lung</tissue>
        <tissue>Spleen</tissue>
        <tissue>Testis</tissue>
    </source>
</reference>
<reference key="4">
    <citation type="journal article" date="2023" name="Elife">
        <title>FAM76B regulates NF-kappaB-mediated inflammatory pathway by influencing the translocation of hnRNPA2B1.</title>
        <authorList>
            <person name="Wang D."/>
            <person name="Zheng X."/>
            <person name="Chai L."/>
            <person name="Zhao J."/>
            <person name="Zhu J."/>
            <person name="Li Y."/>
            <person name="Yang P."/>
            <person name="Mao Q."/>
            <person name="Xia H."/>
        </authorList>
    </citation>
    <scope>DISRUPTION PHENOTYPE</scope>
</reference>
<feature type="initiator methionine" description="Removed" evidence="1">
    <location>
        <position position="1"/>
    </location>
</feature>
<feature type="chain" id="PRO_0000245764" description="Protein FAM76B">
    <location>
        <begin position="2"/>
        <end position="339"/>
    </location>
</feature>
<feature type="region of interest" description="Disordered" evidence="3">
    <location>
        <begin position="144"/>
        <end position="243"/>
    </location>
</feature>
<feature type="coiled-coil region" evidence="2">
    <location>
        <begin position="248"/>
        <end position="328"/>
    </location>
</feature>
<feature type="compositionally biased region" description="Low complexity" evidence="3">
    <location>
        <begin position="148"/>
        <end position="160"/>
    </location>
</feature>
<feature type="compositionally biased region" description="Basic residues" evidence="3">
    <location>
        <begin position="167"/>
        <end position="189"/>
    </location>
</feature>
<feature type="compositionally biased region" description="Basic and acidic residues" evidence="3">
    <location>
        <begin position="215"/>
        <end position="224"/>
    </location>
</feature>
<feature type="compositionally biased region" description="Polar residues" evidence="3">
    <location>
        <begin position="228"/>
        <end position="243"/>
    </location>
</feature>
<feature type="modified residue" description="N-acetylalanine" evidence="1">
    <location>
        <position position="2"/>
    </location>
</feature>
<feature type="modified residue" description="Phosphoserine" evidence="1">
    <location>
        <position position="22"/>
    </location>
</feature>
<feature type="modified residue" description="Phosphoserine" evidence="1">
    <location>
        <position position="148"/>
    </location>
</feature>
<feature type="modified residue" description="Phosphoserine" evidence="7">
    <location>
        <position position="193"/>
    </location>
</feature>
<feature type="modified residue" description="Phosphothreonine" evidence="7">
    <location>
        <position position="215"/>
    </location>
</feature>
<feature type="splice variant" id="VSP_019774" description="In isoform 2." evidence="5">
    <location>
        <begin position="1"/>
        <end position="208"/>
    </location>
</feature>
<feature type="splice variant" id="VSP_019775" description="In isoform 2." evidence="5">
    <original>AAIQNETPKKKPKLESKPSNGD</original>
    <variation>MQFEHLQIFLLLYVIPFYFFLF</variation>
    <location>
        <begin position="209"/>
        <end position="230"/>
    </location>
</feature>
<feature type="splice variant" id="VSP_019776" description="In isoform 2." evidence="5">
    <original>AKNRELLKQ</original>
    <variation>VNGVIYVRC</variation>
    <location>
        <begin position="311"/>
        <end position="319"/>
    </location>
</feature>
<feature type="splice variant" id="VSP_019777" description="In isoform 2." evidence="5">
    <location>
        <begin position="320"/>
        <end position="339"/>
    </location>
</feature>
<feature type="sequence conflict" description="In Ref. 1; BAE26192." evidence="6" ref="1">
    <original>H</original>
    <variation>HH</variation>
    <location>
        <position position="180"/>
    </location>
</feature>
<feature type="sequence conflict" description="In Ref. 2; AAH50870." evidence="6" ref="2">
    <location>
        <position position="233"/>
    </location>
</feature>
<protein>
    <recommendedName>
        <fullName>Protein FAM76B</fullName>
    </recommendedName>
</protein>
<organism>
    <name type="scientific">Mus musculus</name>
    <name type="common">Mouse</name>
    <dbReference type="NCBI Taxonomy" id="10090"/>
    <lineage>
        <taxon>Eukaryota</taxon>
        <taxon>Metazoa</taxon>
        <taxon>Chordata</taxon>
        <taxon>Craniata</taxon>
        <taxon>Vertebrata</taxon>
        <taxon>Euteleostomi</taxon>
        <taxon>Mammalia</taxon>
        <taxon>Eutheria</taxon>
        <taxon>Euarchontoglires</taxon>
        <taxon>Glires</taxon>
        <taxon>Rodentia</taxon>
        <taxon>Myomorpha</taxon>
        <taxon>Muroidea</taxon>
        <taxon>Muridae</taxon>
        <taxon>Murinae</taxon>
        <taxon>Mus</taxon>
        <taxon>Mus</taxon>
    </lineage>
</organism>
<sequence length="339" mass="38556">MAASALYACTKCTQRYPFEELSQGQQLCKECRIAHPIVKCTYCRSEFQQESKTNTICKKCAQNVKQFGTPKPCQYCNIIAAFIGTKCQRCTNSEKKYGAPQTCEQCKQQCAFDRKEEGRRKVDGKLLCWLCTLSYKRVLQKTKEQRKSLGSSHSNSSSSSLTEKDQHHSKHHHHHHHHHHRHSSGHHKVSSLSPEQEQGLWKQSHKSSAAIQNETPKKKPKLESKPSNGDSSSINQSADSGGTDNFVLISQLKEEVMSLKRLLQQRDQTILEKDKKLTELKADFQYQESNLRTKMNSMEKAHKETVEQLQAKNRELLKQVAALSKGKKFDKSGSVLTSP</sequence>
<keyword id="KW-0007">Acetylation</keyword>
<keyword id="KW-0025">Alternative splicing</keyword>
<keyword id="KW-0175">Coiled coil</keyword>
<keyword id="KW-0539">Nucleus</keyword>
<keyword id="KW-0597">Phosphoprotein</keyword>
<keyword id="KW-1185">Reference proteome</keyword>
<keyword id="KW-0694">RNA-binding</keyword>
<comment type="function">
    <text evidence="1">Negatively regulates the NF-kappa-B-mediated inflammatory pathway by preventing the translocation of HNRNPA2B1 from the nucleus to the cytoplasm. Inhibits the PI3K/Akt/NF-kappa-B pathway-mediated polarization of M1 macrophages by binding to and stabilizing PIK3CD mRNA, resulting in increased levels of PIK3CD protein and increased levels of phosphorylated downstream target AKT which leads to decreased NF-kappa-B signaling.</text>
</comment>
<comment type="subunit">
    <text evidence="1">Interacts with HNRNPA2B1 (via C-terminus); the interaction results in retention of HNRNPA2B1 in the nucleus and inhibition of the NF-kappa-B-mediated inflammatory pathway.</text>
</comment>
<comment type="subcellular location">
    <subcellularLocation>
        <location evidence="1">Nucleus speckle</location>
    </subcellularLocation>
</comment>
<comment type="alternative products">
    <event type="alternative splicing"/>
    <isoform>
        <id>Q80XP8-1</id>
        <name>1</name>
        <sequence type="displayed"/>
    </isoform>
    <isoform>
        <id>Q80XP8-2</id>
        <name>2</name>
        <sequence type="described" ref="VSP_019774 VSP_019775 VSP_019776 VSP_019777"/>
    </isoform>
</comment>
<comment type="domain">
    <text evidence="1">The basic polyhistidine region acts as a targeting signal to nuclear speckles.</text>
</comment>
<comment type="disruption phenotype">
    <text evidence="4">Enlarged spleen with white pulp hypertrophy (PubMed:37643469). Increased population of CD11b+ myeloid cells and decreased population of CD19+ B cells with no changes in CD3+ T cells (PubMed:37643469). Enhanced macrophage- and microglia-mediated inflammation (PubMed:37643469).</text>
</comment>
<comment type="similarity">
    <text evidence="6">Belongs to the FAM76 family.</text>
</comment>
<dbReference type="EMBL" id="AK145026">
    <property type="protein sequence ID" value="BAE26192.1"/>
    <property type="molecule type" value="mRNA"/>
</dbReference>
<dbReference type="EMBL" id="BC036328">
    <property type="protein sequence ID" value="AAH36328.1"/>
    <property type="molecule type" value="mRNA"/>
</dbReference>
<dbReference type="EMBL" id="BC043120">
    <property type="protein sequence ID" value="AAH43120.1"/>
    <property type="molecule type" value="mRNA"/>
</dbReference>
<dbReference type="EMBL" id="BC050870">
    <property type="protein sequence ID" value="AAH50870.1"/>
    <property type="molecule type" value="mRNA"/>
</dbReference>
<dbReference type="CCDS" id="CCDS22819.1">
    <molecule id="Q80XP8-1"/>
</dbReference>
<dbReference type="RefSeq" id="NP_789806.1">
    <molecule id="Q80XP8-1"/>
    <property type="nucleotide sequence ID" value="NM_176836.5"/>
</dbReference>
<dbReference type="RefSeq" id="XP_006510693.1">
    <property type="nucleotide sequence ID" value="XM_006510630.3"/>
</dbReference>
<dbReference type="SMR" id="Q80XP8"/>
<dbReference type="BioGRID" id="215590">
    <property type="interactions" value="1"/>
</dbReference>
<dbReference type="FunCoup" id="Q80XP8">
    <property type="interactions" value="3705"/>
</dbReference>
<dbReference type="STRING" id="10090.ENSMUSP00000062642"/>
<dbReference type="iPTMnet" id="Q80XP8"/>
<dbReference type="PhosphoSitePlus" id="Q80XP8"/>
<dbReference type="SwissPalm" id="Q80XP8"/>
<dbReference type="jPOST" id="Q80XP8"/>
<dbReference type="PaxDb" id="10090-ENSMUSP00000062642"/>
<dbReference type="PeptideAtlas" id="Q80XP8"/>
<dbReference type="ProteomicsDB" id="277029">
    <molecule id="Q80XP8-1"/>
</dbReference>
<dbReference type="ProteomicsDB" id="277030">
    <molecule id="Q80XP8-2"/>
</dbReference>
<dbReference type="Pumba" id="Q80XP8"/>
<dbReference type="Antibodypedia" id="31661">
    <property type="antibodies" value="99 antibodies from 17 providers"/>
</dbReference>
<dbReference type="DNASU" id="72826"/>
<dbReference type="Ensembl" id="ENSMUST00000059579.12">
    <molecule id="Q80XP8-1"/>
    <property type="protein sequence ID" value="ENSMUSP00000062642.6"/>
    <property type="gene ID" value="ENSMUSG00000037808.14"/>
</dbReference>
<dbReference type="GeneID" id="72826"/>
<dbReference type="KEGG" id="mmu:72826"/>
<dbReference type="UCSC" id="uc009oef.1">
    <molecule id="Q80XP8-1"/>
    <property type="organism name" value="mouse"/>
</dbReference>
<dbReference type="UCSC" id="uc009oeh.1">
    <molecule id="Q80XP8-2"/>
    <property type="organism name" value="mouse"/>
</dbReference>
<dbReference type="AGR" id="MGI:1920076"/>
<dbReference type="CTD" id="143684"/>
<dbReference type="MGI" id="MGI:1920076">
    <property type="gene designation" value="Fam76b"/>
</dbReference>
<dbReference type="VEuPathDB" id="HostDB:ENSMUSG00000037808"/>
<dbReference type="eggNOG" id="KOG3990">
    <property type="taxonomic scope" value="Eukaryota"/>
</dbReference>
<dbReference type="GeneTree" id="ENSGT00940000159074"/>
<dbReference type="HOGENOM" id="CLU_029220_1_0_1"/>
<dbReference type="InParanoid" id="Q80XP8"/>
<dbReference type="OMA" id="CACAYKR"/>
<dbReference type="OrthoDB" id="3689at2759"/>
<dbReference type="PhylomeDB" id="Q80XP8"/>
<dbReference type="TreeFam" id="TF313644"/>
<dbReference type="BioGRID-ORCS" id="72826">
    <property type="hits" value="2 hits in 75 CRISPR screens"/>
</dbReference>
<dbReference type="CD-CODE" id="3F0300C2">
    <property type="entry name" value="Nuclear speckle"/>
</dbReference>
<dbReference type="ChiTaRS" id="Fam76b">
    <property type="organism name" value="mouse"/>
</dbReference>
<dbReference type="PRO" id="PR:Q80XP8"/>
<dbReference type="Proteomes" id="UP000000589">
    <property type="component" value="Chromosome 9"/>
</dbReference>
<dbReference type="RNAct" id="Q80XP8">
    <property type="molecule type" value="protein"/>
</dbReference>
<dbReference type="Bgee" id="ENSMUSG00000037808">
    <property type="expression patterns" value="Expressed in paneth cell and 255 other cell types or tissues"/>
</dbReference>
<dbReference type="ExpressionAtlas" id="Q80XP8">
    <property type="expression patterns" value="baseline and differential"/>
</dbReference>
<dbReference type="GO" id="GO:0016607">
    <property type="term" value="C:nuclear speck"/>
    <property type="evidence" value="ECO:0000250"/>
    <property type="project" value="UniProtKB"/>
</dbReference>
<dbReference type="GO" id="GO:0003723">
    <property type="term" value="F:RNA binding"/>
    <property type="evidence" value="ECO:0007669"/>
    <property type="project" value="UniProtKB-KW"/>
</dbReference>
<dbReference type="GO" id="GO:0048255">
    <property type="term" value="P:mRNA stabilization"/>
    <property type="evidence" value="ECO:0000250"/>
    <property type="project" value="UniProtKB"/>
</dbReference>
<dbReference type="GO" id="GO:0050728">
    <property type="term" value="P:negative regulation of inflammatory response"/>
    <property type="evidence" value="ECO:0007669"/>
    <property type="project" value="Ensembl"/>
</dbReference>
<dbReference type="GO" id="GO:0043031">
    <property type="term" value="P:negative regulation of macrophage activation"/>
    <property type="evidence" value="ECO:0000315"/>
    <property type="project" value="UniProtKB"/>
</dbReference>
<dbReference type="GO" id="GO:0046826">
    <property type="term" value="P:negative regulation of protein export from nucleus"/>
    <property type="evidence" value="ECO:0007669"/>
    <property type="project" value="Ensembl"/>
</dbReference>
<dbReference type="InterPro" id="IPR032017">
    <property type="entry name" value="FAM76"/>
</dbReference>
<dbReference type="PANTHER" id="PTHR46176">
    <property type="entry name" value="LD21662P"/>
    <property type="match status" value="1"/>
</dbReference>
<dbReference type="PANTHER" id="PTHR46176:SF3">
    <property type="entry name" value="PROTEIN FAM76B"/>
    <property type="match status" value="1"/>
</dbReference>
<dbReference type="Pfam" id="PF16046">
    <property type="entry name" value="FAM76"/>
    <property type="match status" value="1"/>
</dbReference>
<accession>Q80XP8</accession>
<accession>Q3UMA6</accession>
<accession>Q80YR1</accession>
<accession>Q8CI69</accession>
<proteinExistence type="evidence at protein level"/>
<evidence type="ECO:0000250" key="1">
    <source>
        <dbReference type="UniProtKB" id="Q5HYJ3"/>
    </source>
</evidence>
<evidence type="ECO:0000255" key="2"/>
<evidence type="ECO:0000256" key="3">
    <source>
        <dbReference type="SAM" id="MobiDB-lite"/>
    </source>
</evidence>
<evidence type="ECO:0000269" key="4">
    <source>
    </source>
</evidence>
<evidence type="ECO:0000303" key="5">
    <source>
    </source>
</evidence>
<evidence type="ECO:0000305" key="6"/>
<evidence type="ECO:0007744" key="7">
    <source>
    </source>
</evidence>
<gene>
    <name type="primary">Fam76b</name>
</gene>
<name>FA76B_MOUSE</name>